<accession>C0QLD3</accession>
<sequence>MLEIKYVRENIEEVKQALAKRAGKADFEGFARAEKKRRELLQQIEELRHQRNTVSDEIARMKRNKEDAGTSILEMRTVSDEIKTLDKTLAEQDDFIQQFMMAIPNMPHPDVPMGASDADNTLEKKVGTPRSFDFPIKAHWDIGEDLGILDFPRAAKITGARFSLYLGSGAKLERALINFMLDLHTNEHGYTETLPPFIVNRESLLGTGQLPKFEEDLFKIEGQEYYLIPTSEVPMTNIYRDEVLNEENLPIKFTAYTPCFRSEAGSYGKDTRGLIRQHQFNKVELVKYTTPETSYQELESLLANAETVLKRLGLPYQVVTLCSGDLGFSATRTYDIEVWMPGQDKYREISSCSNCEAFQARRANIKFRRAGQKKLEFVHTLNGSGLAVGRTVAAILENFQQPDGSVVIPEVLRPYMGGKETITNETR</sequence>
<feature type="chain" id="PRO_1000203752" description="Serine--tRNA ligase">
    <location>
        <begin position="1"/>
        <end position="427"/>
    </location>
</feature>
<feature type="binding site" evidence="1">
    <location>
        <begin position="230"/>
        <end position="232"/>
    </location>
    <ligand>
        <name>L-serine</name>
        <dbReference type="ChEBI" id="CHEBI:33384"/>
    </ligand>
</feature>
<feature type="binding site" evidence="1">
    <location>
        <begin position="261"/>
        <end position="263"/>
    </location>
    <ligand>
        <name>ATP</name>
        <dbReference type="ChEBI" id="CHEBI:30616"/>
    </ligand>
</feature>
<feature type="binding site" evidence="1">
    <location>
        <position position="284"/>
    </location>
    <ligand>
        <name>L-serine</name>
        <dbReference type="ChEBI" id="CHEBI:33384"/>
    </ligand>
</feature>
<feature type="binding site" evidence="1">
    <location>
        <begin position="348"/>
        <end position="351"/>
    </location>
    <ligand>
        <name>ATP</name>
        <dbReference type="ChEBI" id="CHEBI:30616"/>
    </ligand>
</feature>
<feature type="binding site" evidence="1">
    <location>
        <position position="384"/>
    </location>
    <ligand>
        <name>L-serine</name>
        <dbReference type="ChEBI" id="CHEBI:33384"/>
    </ligand>
</feature>
<protein>
    <recommendedName>
        <fullName evidence="1">Serine--tRNA ligase</fullName>
        <ecNumber evidence="1">6.1.1.11</ecNumber>
    </recommendedName>
    <alternativeName>
        <fullName evidence="1">Seryl-tRNA synthetase</fullName>
        <shortName evidence="1">SerRS</shortName>
    </alternativeName>
    <alternativeName>
        <fullName evidence="1">Seryl-tRNA(Ser/Sec) synthetase</fullName>
    </alternativeName>
</protein>
<gene>
    <name evidence="1" type="primary">serS</name>
    <name type="ordered locus">HRM2_11070</name>
</gene>
<organism>
    <name type="scientific">Desulforapulum autotrophicum (strain ATCC 43914 / DSM 3382 / VKM B-1955 / HRM2)</name>
    <name type="common">Desulfobacterium autotrophicum</name>
    <dbReference type="NCBI Taxonomy" id="177437"/>
    <lineage>
        <taxon>Bacteria</taxon>
        <taxon>Pseudomonadati</taxon>
        <taxon>Thermodesulfobacteriota</taxon>
        <taxon>Desulfobacteria</taxon>
        <taxon>Desulfobacterales</taxon>
        <taxon>Desulfobacteraceae</taxon>
        <taxon>Desulforapulum</taxon>
    </lineage>
</organism>
<dbReference type="EC" id="6.1.1.11" evidence="1"/>
<dbReference type="EMBL" id="CP001087">
    <property type="protein sequence ID" value="ACN14219.1"/>
    <property type="molecule type" value="Genomic_DNA"/>
</dbReference>
<dbReference type="RefSeq" id="WP_015903008.1">
    <property type="nucleotide sequence ID" value="NC_012108.1"/>
</dbReference>
<dbReference type="SMR" id="C0QLD3"/>
<dbReference type="STRING" id="177437.HRM2_11070"/>
<dbReference type="KEGG" id="dat:HRM2_11070"/>
<dbReference type="eggNOG" id="COG0172">
    <property type="taxonomic scope" value="Bacteria"/>
</dbReference>
<dbReference type="HOGENOM" id="CLU_023797_1_1_7"/>
<dbReference type="OrthoDB" id="9804647at2"/>
<dbReference type="UniPathway" id="UPA00906">
    <property type="reaction ID" value="UER00895"/>
</dbReference>
<dbReference type="Proteomes" id="UP000000442">
    <property type="component" value="Chromosome"/>
</dbReference>
<dbReference type="GO" id="GO:0005737">
    <property type="term" value="C:cytoplasm"/>
    <property type="evidence" value="ECO:0007669"/>
    <property type="project" value="UniProtKB-SubCell"/>
</dbReference>
<dbReference type="GO" id="GO:0005524">
    <property type="term" value="F:ATP binding"/>
    <property type="evidence" value="ECO:0007669"/>
    <property type="project" value="UniProtKB-UniRule"/>
</dbReference>
<dbReference type="GO" id="GO:0004828">
    <property type="term" value="F:serine-tRNA ligase activity"/>
    <property type="evidence" value="ECO:0007669"/>
    <property type="project" value="UniProtKB-UniRule"/>
</dbReference>
<dbReference type="GO" id="GO:0016260">
    <property type="term" value="P:selenocysteine biosynthetic process"/>
    <property type="evidence" value="ECO:0007669"/>
    <property type="project" value="UniProtKB-UniRule"/>
</dbReference>
<dbReference type="GO" id="GO:0006434">
    <property type="term" value="P:seryl-tRNA aminoacylation"/>
    <property type="evidence" value="ECO:0007669"/>
    <property type="project" value="UniProtKB-UniRule"/>
</dbReference>
<dbReference type="CDD" id="cd00770">
    <property type="entry name" value="SerRS_core"/>
    <property type="match status" value="1"/>
</dbReference>
<dbReference type="Gene3D" id="3.30.930.10">
    <property type="entry name" value="Bira Bifunctional Protein, Domain 2"/>
    <property type="match status" value="1"/>
</dbReference>
<dbReference type="Gene3D" id="1.10.287.40">
    <property type="entry name" value="Serine-tRNA synthetase, tRNA binding domain"/>
    <property type="match status" value="1"/>
</dbReference>
<dbReference type="HAMAP" id="MF_00176">
    <property type="entry name" value="Ser_tRNA_synth_type1"/>
    <property type="match status" value="1"/>
</dbReference>
<dbReference type="InterPro" id="IPR002314">
    <property type="entry name" value="aa-tRNA-synt_IIb"/>
</dbReference>
<dbReference type="InterPro" id="IPR006195">
    <property type="entry name" value="aa-tRNA-synth_II"/>
</dbReference>
<dbReference type="InterPro" id="IPR045864">
    <property type="entry name" value="aa-tRNA-synth_II/BPL/LPL"/>
</dbReference>
<dbReference type="InterPro" id="IPR002317">
    <property type="entry name" value="Ser-tRNA-ligase_type_1"/>
</dbReference>
<dbReference type="InterPro" id="IPR015866">
    <property type="entry name" value="Ser-tRNA-synth_1_N"/>
</dbReference>
<dbReference type="InterPro" id="IPR042103">
    <property type="entry name" value="SerRS_1_N_sf"/>
</dbReference>
<dbReference type="InterPro" id="IPR033729">
    <property type="entry name" value="SerRS_core"/>
</dbReference>
<dbReference type="InterPro" id="IPR010978">
    <property type="entry name" value="tRNA-bd_arm"/>
</dbReference>
<dbReference type="NCBIfam" id="TIGR00414">
    <property type="entry name" value="serS"/>
    <property type="match status" value="1"/>
</dbReference>
<dbReference type="PANTHER" id="PTHR43697:SF1">
    <property type="entry name" value="SERINE--TRNA LIGASE"/>
    <property type="match status" value="1"/>
</dbReference>
<dbReference type="PANTHER" id="PTHR43697">
    <property type="entry name" value="SERYL-TRNA SYNTHETASE"/>
    <property type="match status" value="1"/>
</dbReference>
<dbReference type="Pfam" id="PF02403">
    <property type="entry name" value="Seryl_tRNA_N"/>
    <property type="match status" value="1"/>
</dbReference>
<dbReference type="Pfam" id="PF00587">
    <property type="entry name" value="tRNA-synt_2b"/>
    <property type="match status" value="1"/>
</dbReference>
<dbReference type="PIRSF" id="PIRSF001529">
    <property type="entry name" value="Ser-tRNA-synth_IIa"/>
    <property type="match status" value="1"/>
</dbReference>
<dbReference type="PRINTS" id="PR00981">
    <property type="entry name" value="TRNASYNTHSER"/>
</dbReference>
<dbReference type="SUPFAM" id="SSF55681">
    <property type="entry name" value="Class II aaRS and biotin synthetases"/>
    <property type="match status" value="1"/>
</dbReference>
<dbReference type="SUPFAM" id="SSF46589">
    <property type="entry name" value="tRNA-binding arm"/>
    <property type="match status" value="1"/>
</dbReference>
<dbReference type="PROSITE" id="PS50862">
    <property type="entry name" value="AA_TRNA_LIGASE_II"/>
    <property type="match status" value="1"/>
</dbReference>
<keyword id="KW-0030">Aminoacyl-tRNA synthetase</keyword>
<keyword id="KW-0067">ATP-binding</keyword>
<keyword id="KW-0963">Cytoplasm</keyword>
<keyword id="KW-0436">Ligase</keyword>
<keyword id="KW-0547">Nucleotide-binding</keyword>
<keyword id="KW-0648">Protein biosynthesis</keyword>
<keyword id="KW-1185">Reference proteome</keyword>
<proteinExistence type="inferred from homology"/>
<reference key="1">
    <citation type="journal article" date="2009" name="Environ. Microbiol.">
        <title>Genome sequence of Desulfobacterium autotrophicum HRM2, a marine sulfate reducer oxidizing organic carbon completely to carbon dioxide.</title>
        <authorList>
            <person name="Strittmatter A.W."/>
            <person name="Liesegang H."/>
            <person name="Rabus R."/>
            <person name="Decker I."/>
            <person name="Amann J."/>
            <person name="Andres S."/>
            <person name="Henne A."/>
            <person name="Fricke W.F."/>
            <person name="Martinez-Arias R."/>
            <person name="Bartels D."/>
            <person name="Goesmann A."/>
            <person name="Krause L."/>
            <person name="Puehler A."/>
            <person name="Klenk H.P."/>
            <person name="Richter M."/>
            <person name="Schuler M."/>
            <person name="Gloeckner F.O."/>
            <person name="Meyerdierks A."/>
            <person name="Gottschalk G."/>
            <person name="Amann R."/>
        </authorList>
    </citation>
    <scope>NUCLEOTIDE SEQUENCE [LARGE SCALE GENOMIC DNA]</scope>
    <source>
        <strain>ATCC 43914 / DSM 3382 / VKM B-1955 / HRM2</strain>
    </source>
</reference>
<name>SYS_DESAH</name>
<comment type="function">
    <text evidence="1">Catalyzes the attachment of serine to tRNA(Ser). Is also able to aminoacylate tRNA(Sec) with serine, to form the misacylated tRNA L-seryl-tRNA(Sec), which will be further converted into selenocysteinyl-tRNA(Sec).</text>
</comment>
<comment type="catalytic activity">
    <reaction evidence="1">
        <text>tRNA(Ser) + L-serine + ATP = L-seryl-tRNA(Ser) + AMP + diphosphate + H(+)</text>
        <dbReference type="Rhea" id="RHEA:12292"/>
        <dbReference type="Rhea" id="RHEA-COMP:9669"/>
        <dbReference type="Rhea" id="RHEA-COMP:9703"/>
        <dbReference type="ChEBI" id="CHEBI:15378"/>
        <dbReference type="ChEBI" id="CHEBI:30616"/>
        <dbReference type="ChEBI" id="CHEBI:33019"/>
        <dbReference type="ChEBI" id="CHEBI:33384"/>
        <dbReference type="ChEBI" id="CHEBI:78442"/>
        <dbReference type="ChEBI" id="CHEBI:78533"/>
        <dbReference type="ChEBI" id="CHEBI:456215"/>
        <dbReference type="EC" id="6.1.1.11"/>
    </reaction>
</comment>
<comment type="catalytic activity">
    <reaction evidence="1">
        <text>tRNA(Sec) + L-serine + ATP = L-seryl-tRNA(Sec) + AMP + diphosphate + H(+)</text>
        <dbReference type="Rhea" id="RHEA:42580"/>
        <dbReference type="Rhea" id="RHEA-COMP:9742"/>
        <dbReference type="Rhea" id="RHEA-COMP:10128"/>
        <dbReference type="ChEBI" id="CHEBI:15378"/>
        <dbReference type="ChEBI" id="CHEBI:30616"/>
        <dbReference type="ChEBI" id="CHEBI:33019"/>
        <dbReference type="ChEBI" id="CHEBI:33384"/>
        <dbReference type="ChEBI" id="CHEBI:78442"/>
        <dbReference type="ChEBI" id="CHEBI:78533"/>
        <dbReference type="ChEBI" id="CHEBI:456215"/>
        <dbReference type="EC" id="6.1.1.11"/>
    </reaction>
</comment>
<comment type="pathway">
    <text evidence="1">Aminoacyl-tRNA biosynthesis; selenocysteinyl-tRNA(Sec) biosynthesis; L-seryl-tRNA(Sec) from L-serine and tRNA(Sec): step 1/1.</text>
</comment>
<comment type="subunit">
    <text evidence="1">Homodimer. The tRNA molecule binds across the dimer.</text>
</comment>
<comment type="subcellular location">
    <subcellularLocation>
        <location evidence="1">Cytoplasm</location>
    </subcellularLocation>
</comment>
<comment type="domain">
    <text evidence="1">Consists of two distinct domains, a catalytic core and a N-terminal extension that is involved in tRNA binding.</text>
</comment>
<comment type="similarity">
    <text evidence="1">Belongs to the class-II aminoacyl-tRNA synthetase family. Type-1 seryl-tRNA synthetase subfamily.</text>
</comment>
<evidence type="ECO:0000255" key="1">
    <source>
        <dbReference type="HAMAP-Rule" id="MF_00176"/>
    </source>
</evidence>